<gene>
    <name evidence="1" type="primary">gppA</name>
    <name type="ordered locus">YPTS_0176</name>
</gene>
<organism>
    <name type="scientific">Yersinia pseudotuberculosis serotype IB (strain PB1/+)</name>
    <dbReference type="NCBI Taxonomy" id="502801"/>
    <lineage>
        <taxon>Bacteria</taxon>
        <taxon>Pseudomonadati</taxon>
        <taxon>Pseudomonadota</taxon>
        <taxon>Gammaproteobacteria</taxon>
        <taxon>Enterobacterales</taxon>
        <taxon>Yersiniaceae</taxon>
        <taxon>Yersinia</taxon>
    </lineage>
</organism>
<accession>B2K045</accession>
<sequence length="498" mass="55926">MMLSSTSLYAAIDLGSNSFHMLVVREVAGSIQTLARIKRKVRLAAGLDNQNHLSQEAMERGWQCLKLFSERLQDIPLDQIRVVATATLRLASNADEFLRTATEILGCPIQVISGEEEARLIYHGVAHTTGGPEQRLVVDIGGGSTELVTGNGAQANILVSLSMGCVTWLERYFGDRHLAKENFERAELAAHEMIKPVAQRFREHGWQVCVGASGTVQALQEIMVAQGMDELITLAKLQQLKQRAIQCGKLEELEIPGLTLERALVFPSGLSILIAIFQELSIESMTLAGGALREGLVYGMLHLPVEQDIRRRTLRNLQRRYLLDTEQAKRVSCLADNFFLQVEKEWHLDGRCREFLQNACLIHEIGLSVDFKHAPQHAAYLIRNLDLPGFTPAQKLLLSALLQNQSDTIDLSLLNQQNALPADMAQHLCRLLRLAIIFSSRRRDDTLPAVRLRADNNALYVLVPQGWLEQHPYRAEALEQESHWQSYVQWPLLLEELS</sequence>
<reference key="1">
    <citation type="submission" date="2008-04" db="EMBL/GenBank/DDBJ databases">
        <title>Complete sequence of Yersinia pseudotuberculosis PB1/+.</title>
        <authorList>
            <person name="Copeland A."/>
            <person name="Lucas S."/>
            <person name="Lapidus A."/>
            <person name="Glavina del Rio T."/>
            <person name="Dalin E."/>
            <person name="Tice H."/>
            <person name="Bruce D."/>
            <person name="Goodwin L."/>
            <person name="Pitluck S."/>
            <person name="Munk A.C."/>
            <person name="Brettin T."/>
            <person name="Detter J.C."/>
            <person name="Han C."/>
            <person name="Tapia R."/>
            <person name="Schmutz J."/>
            <person name="Larimer F."/>
            <person name="Land M."/>
            <person name="Hauser L."/>
            <person name="Challacombe J.F."/>
            <person name="Green L."/>
            <person name="Lindler L.E."/>
            <person name="Nikolich M.P."/>
            <person name="Richardson P."/>
        </authorList>
    </citation>
    <scope>NUCLEOTIDE SEQUENCE [LARGE SCALE GENOMIC DNA]</scope>
    <source>
        <strain>PB1/+</strain>
    </source>
</reference>
<keyword id="KW-0378">Hydrolase</keyword>
<comment type="function">
    <text evidence="1">Catalyzes the conversion of pppGpp to ppGpp. Guanosine pentaphosphate (pppGpp) is a cytoplasmic signaling molecule which together with ppGpp controls the 'stringent response', an adaptive process that allows bacteria to respond to amino acid starvation, resulting in the coordinated regulation of numerous cellular activities.</text>
</comment>
<comment type="catalytic activity">
    <reaction evidence="1">
        <text>guanosine 3'-diphosphate 5'-triphosphate + H2O = guanosine 3',5'-bis(diphosphate) + phosphate + H(+)</text>
        <dbReference type="Rhea" id="RHEA:13073"/>
        <dbReference type="ChEBI" id="CHEBI:15377"/>
        <dbReference type="ChEBI" id="CHEBI:15378"/>
        <dbReference type="ChEBI" id="CHEBI:43474"/>
        <dbReference type="ChEBI" id="CHEBI:77828"/>
        <dbReference type="ChEBI" id="CHEBI:142410"/>
        <dbReference type="EC" id="3.6.1.40"/>
    </reaction>
</comment>
<comment type="pathway">
    <text evidence="1">Purine metabolism; ppGpp biosynthesis; ppGpp from GTP: step 2/2.</text>
</comment>
<comment type="similarity">
    <text evidence="1">Belongs to the GppA/Ppx family. GppA subfamily.</text>
</comment>
<protein>
    <recommendedName>
        <fullName evidence="1">Guanosine-5'-triphosphate,3'-diphosphate pyrophosphatase</fullName>
        <ecNumber evidence="1">3.6.1.40</ecNumber>
    </recommendedName>
    <alternativeName>
        <fullName evidence="1">Guanosine pentaphosphate phosphohydrolase</fullName>
    </alternativeName>
    <alternativeName>
        <fullName evidence="1">pppGpp-5'-phosphohydrolase</fullName>
    </alternativeName>
</protein>
<evidence type="ECO:0000255" key="1">
    <source>
        <dbReference type="HAMAP-Rule" id="MF_01550"/>
    </source>
</evidence>
<feature type="chain" id="PRO_1000192543" description="Guanosine-5'-triphosphate,3'-diphosphate pyrophosphatase">
    <location>
        <begin position="1"/>
        <end position="498"/>
    </location>
</feature>
<name>GPPA_YERPB</name>
<proteinExistence type="inferred from homology"/>
<dbReference type="EC" id="3.6.1.40" evidence="1"/>
<dbReference type="EMBL" id="CP001048">
    <property type="protein sequence ID" value="ACC87173.1"/>
    <property type="molecule type" value="Genomic_DNA"/>
</dbReference>
<dbReference type="SMR" id="B2K045"/>
<dbReference type="KEGG" id="ypb:YPTS_0176"/>
<dbReference type="UniPathway" id="UPA00908">
    <property type="reaction ID" value="UER00885"/>
</dbReference>
<dbReference type="GO" id="GO:0004309">
    <property type="term" value="F:exopolyphosphatase activity"/>
    <property type="evidence" value="ECO:0007669"/>
    <property type="project" value="InterPro"/>
</dbReference>
<dbReference type="GO" id="GO:0008894">
    <property type="term" value="F:guanosine-5'-triphosphate,3'-diphosphate diphosphatase activity"/>
    <property type="evidence" value="ECO:0007669"/>
    <property type="project" value="UniProtKB-UniRule"/>
</dbReference>
<dbReference type="GO" id="GO:0015974">
    <property type="term" value="P:guanosine pentaphosphate catabolic process"/>
    <property type="evidence" value="ECO:0007669"/>
    <property type="project" value="InterPro"/>
</dbReference>
<dbReference type="GO" id="GO:0015970">
    <property type="term" value="P:guanosine tetraphosphate biosynthetic process"/>
    <property type="evidence" value="ECO:0007669"/>
    <property type="project" value="UniProtKB-UniRule"/>
</dbReference>
<dbReference type="GO" id="GO:0015949">
    <property type="term" value="P:nucleobase-containing small molecule interconversion"/>
    <property type="evidence" value="ECO:0007669"/>
    <property type="project" value="TreeGrafter"/>
</dbReference>
<dbReference type="CDD" id="cd24117">
    <property type="entry name" value="ASKHA_NBD_EcGppA-like"/>
    <property type="match status" value="1"/>
</dbReference>
<dbReference type="FunFam" id="1.10.3210.10:FF:000004">
    <property type="entry name" value="Guanosine-5'-triphosphate,3'-diphosphate pyrophosphatase"/>
    <property type="match status" value="1"/>
</dbReference>
<dbReference type="FunFam" id="3.30.420.150:FF:000001">
    <property type="entry name" value="Guanosine-5'-triphosphate,3'-diphosphate pyrophosphatase"/>
    <property type="match status" value="1"/>
</dbReference>
<dbReference type="FunFam" id="3.30.420.40:FF:000023">
    <property type="entry name" value="Guanosine-5'-triphosphate,3'-diphosphate pyrophosphatase"/>
    <property type="match status" value="1"/>
</dbReference>
<dbReference type="Gene3D" id="3.30.420.40">
    <property type="match status" value="1"/>
</dbReference>
<dbReference type="Gene3D" id="3.30.420.150">
    <property type="entry name" value="Exopolyphosphatase. Domain 2"/>
    <property type="match status" value="1"/>
</dbReference>
<dbReference type="Gene3D" id="1.10.3210.10">
    <property type="entry name" value="Hypothetical protein af1432"/>
    <property type="match status" value="1"/>
</dbReference>
<dbReference type="HAMAP" id="MF_01550">
    <property type="entry name" value="GppA"/>
    <property type="match status" value="1"/>
</dbReference>
<dbReference type="InterPro" id="IPR043129">
    <property type="entry name" value="ATPase_NBD"/>
</dbReference>
<dbReference type="InterPro" id="IPR022371">
    <property type="entry name" value="Exopolyphosphatase"/>
</dbReference>
<dbReference type="InterPro" id="IPR050273">
    <property type="entry name" value="GppA/Ppx_hydrolase"/>
</dbReference>
<dbReference type="InterPro" id="IPR023709">
    <property type="entry name" value="Guo-5TP_3DP_PyrP"/>
</dbReference>
<dbReference type="InterPro" id="IPR048950">
    <property type="entry name" value="Ppx_GppA_C"/>
</dbReference>
<dbReference type="InterPro" id="IPR003695">
    <property type="entry name" value="Ppx_GppA_N"/>
</dbReference>
<dbReference type="InterPro" id="IPR030673">
    <property type="entry name" value="PyroPPase_GppA_Ppx"/>
</dbReference>
<dbReference type="NCBIfam" id="TIGR03706">
    <property type="entry name" value="exo_poly_only"/>
    <property type="match status" value="1"/>
</dbReference>
<dbReference type="NCBIfam" id="NF008260">
    <property type="entry name" value="PRK11031.1"/>
    <property type="match status" value="1"/>
</dbReference>
<dbReference type="PANTHER" id="PTHR30005">
    <property type="entry name" value="EXOPOLYPHOSPHATASE"/>
    <property type="match status" value="1"/>
</dbReference>
<dbReference type="PANTHER" id="PTHR30005:SF0">
    <property type="entry name" value="RETROGRADE REGULATION PROTEIN 2"/>
    <property type="match status" value="1"/>
</dbReference>
<dbReference type="Pfam" id="PF02541">
    <property type="entry name" value="Ppx-GppA"/>
    <property type="match status" value="1"/>
</dbReference>
<dbReference type="Pfam" id="PF21447">
    <property type="entry name" value="Ppx-GppA_III"/>
    <property type="match status" value="1"/>
</dbReference>
<dbReference type="PIRSF" id="PIRSF001267">
    <property type="entry name" value="Pyrophosphatase_GppA_Ppx"/>
    <property type="match status" value="1"/>
</dbReference>
<dbReference type="SUPFAM" id="SSF53067">
    <property type="entry name" value="Actin-like ATPase domain"/>
    <property type="match status" value="2"/>
</dbReference>
<dbReference type="SUPFAM" id="SSF109604">
    <property type="entry name" value="HD-domain/PDEase-like"/>
    <property type="match status" value="1"/>
</dbReference>